<comment type="function">
    <text evidence="1">Involved in DNA repair and RecF pathway recombination.</text>
</comment>
<comment type="similarity">
    <text evidence="1">Belongs to the RecO family.</text>
</comment>
<accession>A5EKL4</accession>
<protein>
    <recommendedName>
        <fullName evidence="1">DNA repair protein RecO</fullName>
    </recommendedName>
    <alternativeName>
        <fullName evidence="1">Recombination protein O</fullName>
    </alternativeName>
</protein>
<organism>
    <name type="scientific">Bradyrhizobium sp. (strain BTAi1 / ATCC BAA-1182)</name>
    <dbReference type="NCBI Taxonomy" id="288000"/>
    <lineage>
        <taxon>Bacteria</taxon>
        <taxon>Pseudomonadati</taxon>
        <taxon>Pseudomonadota</taxon>
        <taxon>Alphaproteobacteria</taxon>
        <taxon>Hyphomicrobiales</taxon>
        <taxon>Nitrobacteraceae</taxon>
        <taxon>Bradyrhizobium</taxon>
    </lineage>
</organism>
<reference key="1">
    <citation type="journal article" date="2007" name="Science">
        <title>Legumes symbioses: absence of nod genes in photosynthetic bradyrhizobia.</title>
        <authorList>
            <person name="Giraud E."/>
            <person name="Moulin L."/>
            <person name="Vallenet D."/>
            <person name="Barbe V."/>
            <person name="Cytryn E."/>
            <person name="Avarre J.-C."/>
            <person name="Jaubert M."/>
            <person name="Simon D."/>
            <person name="Cartieaux F."/>
            <person name="Prin Y."/>
            <person name="Bena G."/>
            <person name="Hannibal L."/>
            <person name="Fardoux J."/>
            <person name="Kojadinovic M."/>
            <person name="Vuillet L."/>
            <person name="Lajus A."/>
            <person name="Cruveiller S."/>
            <person name="Rouy Z."/>
            <person name="Mangenot S."/>
            <person name="Segurens B."/>
            <person name="Dossat C."/>
            <person name="Franck W.L."/>
            <person name="Chang W.-S."/>
            <person name="Saunders E."/>
            <person name="Bruce D."/>
            <person name="Richardson P."/>
            <person name="Normand P."/>
            <person name="Dreyfus B."/>
            <person name="Pignol D."/>
            <person name="Stacey G."/>
            <person name="Emerich D."/>
            <person name="Vermeglio A."/>
            <person name="Medigue C."/>
            <person name="Sadowsky M."/>
        </authorList>
    </citation>
    <scope>NUCLEOTIDE SEQUENCE [LARGE SCALE GENOMIC DNA]</scope>
    <source>
        <strain>BTAi1 / ATCC BAA-1182</strain>
    </source>
</reference>
<feature type="chain" id="PRO_1000012123" description="DNA repair protein RecO">
    <location>
        <begin position="1"/>
        <end position="248"/>
    </location>
</feature>
<evidence type="ECO:0000255" key="1">
    <source>
        <dbReference type="HAMAP-Rule" id="MF_00201"/>
    </source>
</evidence>
<proteinExistence type="inferred from homology"/>
<sequence>MEWTDDGIVLGLRRHGESSAVLELLTREHGRHLGLVRGASGARMRPMLQPGNTVRAVWRARLDEHLGMYAIDGLTLRAAELMSVAHGAYGVTHLAALARLLPERDPHQEMYLRLEHALDDFAEAGGAAVHIVRFELAILAELGFGLDLESCAATGETTDLVYVSPKSGGAVSRSAGAPWADRLLPLPPFLRESEDDHGFSDQDLLDGFRLTGLFLLRHVLEPRGQGHSDAREGFINAVTRARARLAQV</sequence>
<gene>
    <name evidence="1" type="primary">recO</name>
    <name type="ordered locus">BBta_4680</name>
</gene>
<name>RECO_BRASB</name>
<dbReference type="EMBL" id="CP000494">
    <property type="protein sequence ID" value="ABQ36708.1"/>
    <property type="molecule type" value="Genomic_DNA"/>
</dbReference>
<dbReference type="RefSeq" id="WP_012044695.1">
    <property type="nucleotide sequence ID" value="NC_009485.1"/>
</dbReference>
<dbReference type="SMR" id="A5EKL4"/>
<dbReference type="STRING" id="288000.BBta_4680"/>
<dbReference type="KEGG" id="bbt:BBta_4680"/>
<dbReference type="eggNOG" id="COG1381">
    <property type="taxonomic scope" value="Bacteria"/>
</dbReference>
<dbReference type="HOGENOM" id="CLU_086029_0_0_5"/>
<dbReference type="OrthoDB" id="9804792at2"/>
<dbReference type="Proteomes" id="UP000000246">
    <property type="component" value="Chromosome"/>
</dbReference>
<dbReference type="GO" id="GO:0043590">
    <property type="term" value="C:bacterial nucleoid"/>
    <property type="evidence" value="ECO:0007669"/>
    <property type="project" value="TreeGrafter"/>
</dbReference>
<dbReference type="GO" id="GO:0006310">
    <property type="term" value="P:DNA recombination"/>
    <property type="evidence" value="ECO:0007669"/>
    <property type="project" value="UniProtKB-UniRule"/>
</dbReference>
<dbReference type="GO" id="GO:0006302">
    <property type="term" value="P:double-strand break repair"/>
    <property type="evidence" value="ECO:0007669"/>
    <property type="project" value="TreeGrafter"/>
</dbReference>
<dbReference type="Gene3D" id="2.40.50.140">
    <property type="entry name" value="Nucleic acid-binding proteins"/>
    <property type="match status" value="1"/>
</dbReference>
<dbReference type="Gene3D" id="1.20.1440.120">
    <property type="entry name" value="Recombination protein O, C-terminal domain"/>
    <property type="match status" value="1"/>
</dbReference>
<dbReference type="HAMAP" id="MF_00201">
    <property type="entry name" value="RecO"/>
    <property type="match status" value="1"/>
</dbReference>
<dbReference type="InterPro" id="IPR037278">
    <property type="entry name" value="ARFGAP/RecO"/>
</dbReference>
<dbReference type="InterPro" id="IPR022572">
    <property type="entry name" value="DNA_rep/recomb_RecO_N"/>
</dbReference>
<dbReference type="InterPro" id="IPR012340">
    <property type="entry name" value="NA-bd_OB-fold"/>
</dbReference>
<dbReference type="InterPro" id="IPR003717">
    <property type="entry name" value="RecO"/>
</dbReference>
<dbReference type="InterPro" id="IPR042242">
    <property type="entry name" value="RecO_C"/>
</dbReference>
<dbReference type="NCBIfam" id="TIGR00613">
    <property type="entry name" value="reco"/>
    <property type="match status" value="1"/>
</dbReference>
<dbReference type="PANTHER" id="PTHR33991">
    <property type="entry name" value="DNA REPAIR PROTEIN RECO"/>
    <property type="match status" value="1"/>
</dbReference>
<dbReference type="PANTHER" id="PTHR33991:SF1">
    <property type="entry name" value="DNA REPAIR PROTEIN RECO"/>
    <property type="match status" value="1"/>
</dbReference>
<dbReference type="Pfam" id="PF02565">
    <property type="entry name" value="RecO_C"/>
    <property type="match status" value="1"/>
</dbReference>
<dbReference type="Pfam" id="PF11967">
    <property type="entry name" value="RecO_N"/>
    <property type="match status" value="1"/>
</dbReference>
<dbReference type="SUPFAM" id="SSF57863">
    <property type="entry name" value="ArfGap/RecO-like zinc finger"/>
    <property type="match status" value="1"/>
</dbReference>
<dbReference type="SUPFAM" id="SSF50249">
    <property type="entry name" value="Nucleic acid-binding proteins"/>
    <property type="match status" value="1"/>
</dbReference>
<keyword id="KW-0227">DNA damage</keyword>
<keyword id="KW-0233">DNA recombination</keyword>
<keyword id="KW-0234">DNA repair</keyword>
<keyword id="KW-1185">Reference proteome</keyword>